<comment type="function">
    <text evidence="1">Required for rescue of stalled ribosomes mediated by trans-translation. Binds to transfer-messenger RNA (tmRNA), required for stable association of tmRNA with ribosomes. tmRNA and SmpB together mimic tRNA shape, replacing the anticodon stem-loop with SmpB. tmRNA is encoded by the ssrA gene; the 2 termini fold to resemble tRNA(Ala) and it encodes a 'tag peptide', a short internal open reading frame. During trans-translation Ala-aminoacylated tmRNA acts like a tRNA, entering the A-site of stalled ribosomes, displacing the stalled mRNA. The ribosome then switches to translate the ORF on the tmRNA; the nascent peptide is terminated with the 'tag peptide' encoded by the tmRNA and targeted for degradation. The ribosome is freed to recommence translation, which seems to be the essential function of trans-translation.</text>
</comment>
<comment type="subcellular location">
    <subcellularLocation>
        <location evidence="1">Cytoplasm</location>
    </subcellularLocation>
    <text evidence="1">The tmRNA-SmpB complex associates with stalled 70S ribosomes.</text>
</comment>
<comment type="similarity">
    <text evidence="1">Belongs to the SmpB family.</text>
</comment>
<reference key="1">
    <citation type="submission" date="2004-06" db="EMBL/GenBank/DDBJ databases">
        <authorList>
            <person name="Birren B.W."/>
            <person name="Stange-Thomann N."/>
            <person name="Hafez N."/>
            <person name="DeCaprio D."/>
            <person name="Fisher S."/>
            <person name="Butler J."/>
            <person name="Elkins T."/>
            <person name="Kodira C.D."/>
            <person name="Major J."/>
            <person name="Wang S."/>
            <person name="Nicol R."/>
            <person name="Nusbaum C."/>
        </authorList>
    </citation>
    <scope>NUCLEOTIDE SEQUENCE [LARGE SCALE GENOMIC DNA]</scope>
    <source>
        <strain>ATCC 33453 / NBRC 100688 / NCTC 11704 / L1</strain>
    </source>
</reference>
<gene>
    <name evidence="1" type="primary">smpB</name>
    <name type="ordered locus">Mfl210</name>
</gene>
<evidence type="ECO:0000255" key="1">
    <source>
        <dbReference type="HAMAP-Rule" id="MF_00023"/>
    </source>
</evidence>
<sequence length="149" mass="17694">MGEHVIALNKKAKFNYEILETWEAGIELYGPEIKSIRNHEANIAEAFILIRKKEAFLINANIKKYDYANFVKGIDPLRTRKLLLHKKEINKILKRVMLEKLTIVPLRLYLKGNYAKLEIGLGRGKKIHDKRETIKKRDIERKEMRKYKY</sequence>
<dbReference type="EMBL" id="AE017263">
    <property type="protein sequence ID" value="AAT75567.1"/>
    <property type="molecule type" value="Genomic_DNA"/>
</dbReference>
<dbReference type="RefSeq" id="WP_011183107.1">
    <property type="nucleotide sequence ID" value="NC_006055.1"/>
</dbReference>
<dbReference type="RefSeq" id="YP_053451.1">
    <property type="nucleotide sequence ID" value="NC_006055.1"/>
</dbReference>
<dbReference type="SMR" id="Q6F1Q6"/>
<dbReference type="STRING" id="265311.Mfl210"/>
<dbReference type="PaxDb" id="265311-Mfl210"/>
<dbReference type="EnsemblBacteria" id="AAT75567">
    <property type="protein sequence ID" value="AAT75567"/>
    <property type="gene ID" value="Mfl210"/>
</dbReference>
<dbReference type="GeneID" id="2898065"/>
<dbReference type="KEGG" id="mfl:Mfl210"/>
<dbReference type="PATRIC" id="fig|265311.5.peg.211"/>
<dbReference type="eggNOG" id="COG0691">
    <property type="taxonomic scope" value="Bacteria"/>
</dbReference>
<dbReference type="HOGENOM" id="CLU_108953_0_1_14"/>
<dbReference type="OrthoDB" id="9805462at2"/>
<dbReference type="Proteomes" id="UP000006647">
    <property type="component" value="Chromosome"/>
</dbReference>
<dbReference type="GO" id="GO:0005829">
    <property type="term" value="C:cytosol"/>
    <property type="evidence" value="ECO:0007669"/>
    <property type="project" value="TreeGrafter"/>
</dbReference>
<dbReference type="GO" id="GO:0003723">
    <property type="term" value="F:RNA binding"/>
    <property type="evidence" value="ECO:0007669"/>
    <property type="project" value="UniProtKB-UniRule"/>
</dbReference>
<dbReference type="GO" id="GO:0070929">
    <property type="term" value="P:trans-translation"/>
    <property type="evidence" value="ECO:0007669"/>
    <property type="project" value="UniProtKB-UniRule"/>
</dbReference>
<dbReference type="CDD" id="cd09294">
    <property type="entry name" value="SmpB"/>
    <property type="match status" value="1"/>
</dbReference>
<dbReference type="Gene3D" id="2.40.280.10">
    <property type="match status" value="1"/>
</dbReference>
<dbReference type="HAMAP" id="MF_00023">
    <property type="entry name" value="SmpB"/>
    <property type="match status" value="1"/>
</dbReference>
<dbReference type="InterPro" id="IPR023620">
    <property type="entry name" value="SmpB"/>
</dbReference>
<dbReference type="InterPro" id="IPR000037">
    <property type="entry name" value="SsrA-bd_prot"/>
</dbReference>
<dbReference type="InterPro" id="IPR020081">
    <property type="entry name" value="SsrA-bd_prot_CS"/>
</dbReference>
<dbReference type="NCBIfam" id="NF003843">
    <property type="entry name" value="PRK05422.1"/>
    <property type="match status" value="1"/>
</dbReference>
<dbReference type="NCBIfam" id="TIGR00086">
    <property type="entry name" value="smpB"/>
    <property type="match status" value="1"/>
</dbReference>
<dbReference type="PANTHER" id="PTHR30308:SF2">
    <property type="entry name" value="SSRA-BINDING PROTEIN"/>
    <property type="match status" value="1"/>
</dbReference>
<dbReference type="PANTHER" id="PTHR30308">
    <property type="entry name" value="TMRNA-BINDING COMPONENT OF TRANS-TRANSLATION TAGGING COMPLEX"/>
    <property type="match status" value="1"/>
</dbReference>
<dbReference type="Pfam" id="PF01668">
    <property type="entry name" value="SmpB"/>
    <property type="match status" value="1"/>
</dbReference>
<dbReference type="SUPFAM" id="SSF74982">
    <property type="entry name" value="Small protein B (SmpB)"/>
    <property type="match status" value="1"/>
</dbReference>
<dbReference type="PROSITE" id="PS01317">
    <property type="entry name" value="SSRP"/>
    <property type="match status" value="1"/>
</dbReference>
<name>SSRP_MESFL</name>
<feature type="chain" id="PRO_0000102977" description="SsrA-binding protein">
    <location>
        <begin position="1"/>
        <end position="149"/>
    </location>
</feature>
<accession>Q6F1Q6</accession>
<keyword id="KW-0963">Cytoplasm</keyword>
<keyword id="KW-1185">Reference proteome</keyword>
<keyword id="KW-0694">RNA-binding</keyword>
<protein>
    <recommendedName>
        <fullName evidence="1">SsrA-binding protein</fullName>
    </recommendedName>
    <alternativeName>
        <fullName evidence="1">Small protein B</fullName>
    </alternativeName>
</protein>
<organism>
    <name type="scientific">Mesoplasma florum (strain ATCC 33453 / NBRC 100688 / NCTC 11704 / L1)</name>
    <name type="common">Acholeplasma florum</name>
    <dbReference type="NCBI Taxonomy" id="265311"/>
    <lineage>
        <taxon>Bacteria</taxon>
        <taxon>Bacillati</taxon>
        <taxon>Mycoplasmatota</taxon>
        <taxon>Mollicutes</taxon>
        <taxon>Entomoplasmatales</taxon>
        <taxon>Entomoplasmataceae</taxon>
        <taxon>Mesoplasma</taxon>
    </lineage>
</organism>
<proteinExistence type="inferred from homology"/>